<dbReference type="EC" id="5.4.2.4" evidence="1"/>
<dbReference type="EC" id="5.4.2.11" evidence="1"/>
<dbReference type="EMBL" id="M15884">
    <property type="protein sequence ID" value="AAA31240.1"/>
    <property type="molecule type" value="mRNA"/>
</dbReference>
<dbReference type="PIR" id="A24973">
    <property type="entry name" value="PMRBBM"/>
</dbReference>
<dbReference type="RefSeq" id="NP_001075738.1">
    <property type="nucleotide sequence ID" value="NM_001082269.2"/>
</dbReference>
<dbReference type="RefSeq" id="XP_008256342.1">
    <property type="nucleotide sequence ID" value="XM_008258120.2"/>
</dbReference>
<dbReference type="RefSeq" id="XP_008256343.1">
    <property type="nucleotide sequence ID" value="XM_008258121.2"/>
</dbReference>
<dbReference type="SMR" id="P07952"/>
<dbReference type="FunCoup" id="P07952">
    <property type="interactions" value="121"/>
</dbReference>
<dbReference type="STRING" id="9986.ENSOCUP00000002728"/>
<dbReference type="PaxDb" id="9986-ENSOCUP00000002728"/>
<dbReference type="Ensembl" id="ENSOCUT00000003140.4">
    <property type="protein sequence ID" value="ENSOCUP00000002728.2"/>
    <property type="gene ID" value="ENSOCUG00000003144.4"/>
</dbReference>
<dbReference type="GeneID" id="100009096"/>
<dbReference type="KEGG" id="ocu:100009096"/>
<dbReference type="CTD" id="669"/>
<dbReference type="eggNOG" id="KOG0235">
    <property type="taxonomic scope" value="Eukaryota"/>
</dbReference>
<dbReference type="GeneTree" id="ENSGT00950000182926"/>
<dbReference type="HOGENOM" id="CLU_033323_1_1_1"/>
<dbReference type="InParanoid" id="P07952"/>
<dbReference type="OMA" id="TGWHDVP"/>
<dbReference type="OrthoDB" id="354304at2759"/>
<dbReference type="TreeFam" id="TF300007"/>
<dbReference type="Proteomes" id="UP000001811">
    <property type="component" value="Chromosome 7"/>
</dbReference>
<dbReference type="Bgee" id="ENSOCUG00000003144">
    <property type="expression patterns" value="Expressed in blood and 15 other cell types or tissues"/>
</dbReference>
<dbReference type="GO" id="GO:0004082">
    <property type="term" value="F:bisphosphoglycerate mutase activity"/>
    <property type="evidence" value="ECO:0007669"/>
    <property type="project" value="UniProtKB-EC"/>
</dbReference>
<dbReference type="GO" id="GO:0016787">
    <property type="term" value="F:hydrolase activity"/>
    <property type="evidence" value="ECO:0007669"/>
    <property type="project" value="UniProtKB-KW"/>
</dbReference>
<dbReference type="GO" id="GO:0004619">
    <property type="term" value="F:phosphoglycerate mutase activity"/>
    <property type="evidence" value="ECO:0007669"/>
    <property type="project" value="UniProtKB-EC"/>
</dbReference>
<dbReference type="GO" id="GO:0033554">
    <property type="term" value="P:cellular response to stress"/>
    <property type="evidence" value="ECO:0007669"/>
    <property type="project" value="Ensembl"/>
</dbReference>
<dbReference type="GO" id="GO:0042832">
    <property type="term" value="P:defense response to protozoan"/>
    <property type="evidence" value="ECO:0007669"/>
    <property type="project" value="Ensembl"/>
</dbReference>
<dbReference type="GO" id="GO:0048821">
    <property type="term" value="P:erythrocyte development"/>
    <property type="evidence" value="ECO:0007669"/>
    <property type="project" value="Ensembl"/>
</dbReference>
<dbReference type="GO" id="GO:0060856">
    <property type="term" value="P:establishment of blood-brain barrier"/>
    <property type="evidence" value="ECO:0007669"/>
    <property type="project" value="Ensembl"/>
</dbReference>
<dbReference type="GO" id="GO:0006096">
    <property type="term" value="P:glycolytic process"/>
    <property type="evidence" value="ECO:0007669"/>
    <property type="project" value="UniProtKB-KW"/>
</dbReference>
<dbReference type="GO" id="GO:0150076">
    <property type="term" value="P:neuroinflammatory response"/>
    <property type="evidence" value="ECO:0007669"/>
    <property type="project" value="Ensembl"/>
</dbReference>
<dbReference type="GO" id="GO:0015671">
    <property type="term" value="P:oxygen transport"/>
    <property type="evidence" value="ECO:0007669"/>
    <property type="project" value="Ensembl"/>
</dbReference>
<dbReference type="CDD" id="cd07067">
    <property type="entry name" value="HP_PGM_like"/>
    <property type="match status" value="1"/>
</dbReference>
<dbReference type="FunFam" id="3.40.50.1240:FF:000012">
    <property type="entry name" value="Phosphoglycerate mutase 1"/>
    <property type="match status" value="1"/>
</dbReference>
<dbReference type="Gene3D" id="3.40.50.1240">
    <property type="entry name" value="Phosphoglycerate mutase-like"/>
    <property type="match status" value="1"/>
</dbReference>
<dbReference type="HAMAP" id="MF_01039">
    <property type="entry name" value="PGAM_GpmA"/>
    <property type="match status" value="1"/>
</dbReference>
<dbReference type="InterPro" id="IPR013078">
    <property type="entry name" value="His_Pase_superF_clade-1"/>
</dbReference>
<dbReference type="InterPro" id="IPR029033">
    <property type="entry name" value="His_PPase_superfam"/>
</dbReference>
<dbReference type="InterPro" id="IPR001345">
    <property type="entry name" value="PG/BPGM_mutase_AS"/>
</dbReference>
<dbReference type="InterPro" id="IPR005952">
    <property type="entry name" value="Phosphogly_mut1"/>
</dbReference>
<dbReference type="NCBIfam" id="TIGR01258">
    <property type="entry name" value="pgm_1"/>
    <property type="match status" value="1"/>
</dbReference>
<dbReference type="NCBIfam" id="NF010713">
    <property type="entry name" value="PRK14115.1"/>
    <property type="match status" value="1"/>
</dbReference>
<dbReference type="PANTHER" id="PTHR11931">
    <property type="entry name" value="PHOSPHOGLYCERATE MUTASE"/>
    <property type="match status" value="1"/>
</dbReference>
<dbReference type="Pfam" id="PF00300">
    <property type="entry name" value="His_Phos_1"/>
    <property type="match status" value="2"/>
</dbReference>
<dbReference type="PIRSF" id="PIRSF000709">
    <property type="entry name" value="6PFK_2-Ptase"/>
    <property type="match status" value="1"/>
</dbReference>
<dbReference type="SMART" id="SM00855">
    <property type="entry name" value="PGAM"/>
    <property type="match status" value="1"/>
</dbReference>
<dbReference type="SUPFAM" id="SSF53254">
    <property type="entry name" value="Phosphoglycerate mutase-like"/>
    <property type="match status" value="1"/>
</dbReference>
<dbReference type="PROSITE" id="PS00175">
    <property type="entry name" value="PG_MUTASE"/>
    <property type="match status" value="1"/>
</dbReference>
<reference key="1">
    <citation type="journal article" date="1986" name="Gene">
        <title>Isolation and characterization of cDNA encoding rabbit reticulocyte 2,3-bisphosphoglycerate synthase.</title>
        <authorList>
            <person name="Yanagawa S."/>
            <person name="Hitomi K."/>
            <person name="Sasaki R."/>
            <person name="Chiba H."/>
        </authorList>
    </citation>
    <scope>NUCLEOTIDE SEQUENCE [MRNA]</scope>
    <scope>TISSUE SPECIFICITY</scope>
</reference>
<sequence length="259" mass="30030">MSKYKLIMLRHGEGAWNKENRFCSWVDQKLNSEGMEEARNCGKQLKALNFEFDLVFTSVLNRSIHTAWLILEELGQEWVPVESSWRLNERHYGALIGLNREKMALNHGEEQVRIWRRSYNVTPPPIEESHPYYHEIYSDRRYRVCDVPLDQLPRSESLKDVLERLLPYWNERIAPEVLRGKTVLISAHGNSSRALLKHLEGISDEDIINITLPTGVPILLELDENLRAVGPHQFLGDQEAIQAAIKKVEDQGKVKRAEK</sequence>
<accession>P07952</accession>
<feature type="initiator methionine" description="Removed" evidence="1">
    <location>
        <position position="1"/>
    </location>
</feature>
<feature type="chain" id="PRO_0000179836" description="Bisphosphoglycerate mutase">
    <location>
        <begin position="2"/>
        <end position="259"/>
    </location>
</feature>
<feature type="active site" description="Tele-phosphohistidine intermediate" evidence="1">
    <location>
        <position position="11"/>
    </location>
</feature>
<feature type="active site" description="Proton donor/acceptor" evidence="1">
    <location>
        <position position="89"/>
    </location>
</feature>
<feature type="binding site" evidence="1">
    <location>
        <begin position="10"/>
        <end position="17"/>
    </location>
    <ligand>
        <name>substrate</name>
    </ligand>
</feature>
<feature type="binding site" evidence="1">
    <location>
        <begin position="23"/>
        <end position="24"/>
    </location>
    <ligand>
        <name>substrate</name>
    </ligand>
</feature>
<feature type="binding site" evidence="1">
    <location>
        <position position="62"/>
    </location>
    <ligand>
        <name>substrate</name>
    </ligand>
</feature>
<feature type="binding site" evidence="1">
    <location>
        <begin position="89"/>
        <end position="92"/>
    </location>
    <ligand>
        <name>substrate</name>
    </ligand>
</feature>
<feature type="binding site" evidence="1">
    <location>
        <position position="100"/>
    </location>
    <ligand>
        <name>substrate</name>
    </ligand>
</feature>
<feature type="binding site" evidence="1">
    <location>
        <begin position="116"/>
        <end position="117"/>
    </location>
    <ligand>
        <name>substrate</name>
    </ligand>
</feature>
<feature type="binding site" evidence="1">
    <location>
        <begin position="189"/>
        <end position="190"/>
    </location>
    <ligand>
        <name>substrate</name>
    </ligand>
</feature>
<feature type="site" description="Transition state stabilizer" evidence="1">
    <location>
        <position position="188"/>
    </location>
</feature>
<feature type="modified residue" description="N-acetylserine" evidence="1">
    <location>
        <position position="2"/>
    </location>
</feature>
<feature type="modified residue" description="Phosphothreonine" evidence="1">
    <location>
        <position position="122"/>
    </location>
</feature>
<comment type="function">
    <text evidence="1">Plays a major role in regulating hemoglobin oxygen affinity by controlling the levels of its allosteric effector 2,3-bisphosphoglycerate (2,3-BPG). Also exhibits mutase (EC 5.4.2.11) activity.</text>
</comment>
<comment type="catalytic activity">
    <reaction evidence="1">
        <text>(2R)-3-phospho-glyceroyl phosphate = (2R)-2,3-bisphosphoglycerate + H(+)</text>
        <dbReference type="Rhea" id="RHEA:17765"/>
        <dbReference type="ChEBI" id="CHEBI:15378"/>
        <dbReference type="ChEBI" id="CHEBI:57604"/>
        <dbReference type="ChEBI" id="CHEBI:58248"/>
        <dbReference type="EC" id="5.4.2.4"/>
    </reaction>
</comment>
<comment type="catalytic activity">
    <reaction evidence="1">
        <text>(2R)-2-phosphoglycerate = (2R)-3-phosphoglycerate</text>
        <dbReference type="Rhea" id="RHEA:15901"/>
        <dbReference type="ChEBI" id="CHEBI:58272"/>
        <dbReference type="ChEBI" id="CHEBI:58289"/>
        <dbReference type="EC" id="5.4.2.11"/>
    </reaction>
</comment>
<comment type="activity regulation">
    <text evidence="1">At alkaline pH BPGM favors the synthase reaction; however, at lower pH the phosphatase reaction is dominant. Inhibited by citrate.</text>
</comment>
<comment type="subunit">
    <text>Homodimer.</text>
</comment>
<comment type="tissue specificity">
    <text evidence="2">Expressed in red blood cells.</text>
</comment>
<comment type="similarity">
    <text evidence="3">Belongs to the phosphoglycerate mutase family. BPG-dependent PGAM subfamily.</text>
</comment>
<gene>
    <name type="primary">BPGM</name>
</gene>
<protein>
    <recommendedName>
        <fullName>Bisphosphoglycerate mutase</fullName>
        <shortName>BPGM</shortName>
        <ecNumber evidence="1">5.4.2.4</ecNumber>
    </recommendedName>
    <alternativeName>
        <fullName>2,3-bisphosphoglycerate mutase, erythrocyte</fullName>
    </alternativeName>
    <alternativeName>
        <fullName>2,3-bisphosphoglycerate synthase</fullName>
        <ecNumber evidence="1">5.4.2.11</ecNumber>
    </alternativeName>
    <alternativeName>
        <fullName>BPG-dependent PGAM</fullName>
    </alternativeName>
</protein>
<organism>
    <name type="scientific">Oryctolagus cuniculus</name>
    <name type="common">Rabbit</name>
    <dbReference type="NCBI Taxonomy" id="9986"/>
    <lineage>
        <taxon>Eukaryota</taxon>
        <taxon>Metazoa</taxon>
        <taxon>Chordata</taxon>
        <taxon>Craniata</taxon>
        <taxon>Vertebrata</taxon>
        <taxon>Euteleostomi</taxon>
        <taxon>Mammalia</taxon>
        <taxon>Eutheria</taxon>
        <taxon>Euarchontoglires</taxon>
        <taxon>Glires</taxon>
        <taxon>Lagomorpha</taxon>
        <taxon>Leporidae</taxon>
        <taxon>Oryctolagus</taxon>
    </lineage>
</organism>
<proteinExistence type="evidence at transcript level"/>
<name>PMGE_RABIT</name>
<keyword id="KW-0007">Acetylation</keyword>
<keyword id="KW-0324">Glycolysis</keyword>
<keyword id="KW-0378">Hydrolase</keyword>
<keyword id="KW-0413">Isomerase</keyword>
<keyword id="KW-0597">Phosphoprotein</keyword>
<keyword id="KW-1185">Reference proteome</keyword>
<evidence type="ECO:0000250" key="1">
    <source>
        <dbReference type="UniProtKB" id="P07738"/>
    </source>
</evidence>
<evidence type="ECO:0000269" key="2">
    <source>
    </source>
</evidence>
<evidence type="ECO:0000305" key="3"/>